<organism>
    <name type="scientific">Methanosarcina mazei (strain ATCC BAA-159 / DSM 3647 / Goe1 / Go1 / JCM 11833 / OCM 88)</name>
    <name type="common">Methanosarcina frisia</name>
    <dbReference type="NCBI Taxonomy" id="192952"/>
    <lineage>
        <taxon>Archaea</taxon>
        <taxon>Methanobacteriati</taxon>
        <taxon>Methanobacteriota</taxon>
        <taxon>Stenosarchaea group</taxon>
        <taxon>Methanomicrobia</taxon>
        <taxon>Methanosarcinales</taxon>
        <taxon>Methanosarcinaceae</taxon>
        <taxon>Methanosarcina</taxon>
    </lineage>
</organism>
<evidence type="ECO:0000255" key="1">
    <source>
        <dbReference type="HAMAP-Rule" id="MF_00403"/>
    </source>
</evidence>
<evidence type="ECO:0000305" key="2"/>
<gene>
    <name evidence="1" type="primary">rps12</name>
    <name type="ordered locus">MM_2267</name>
</gene>
<protein>
    <recommendedName>
        <fullName evidence="1">Small ribosomal subunit protein uS12</fullName>
    </recommendedName>
    <alternativeName>
        <fullName evidence="2">30S ribosomal protein S12</fullName>
    </alternativeName>
</protein>
<name>RS12_METMA</name>
<reference key="1">
    <citation type="journal article" date="2002" name="J. Mol. Microbiol. Biotechnol.">
        <title>The genome of Methanosarcina mazei: evidence for lateral gene transfer between Bacteria and Archaea.</title>
        <authorList>
            <person name="Deppenmeier U."/>
            <person name="Johann A."/>
            <person name="Hartsch T."/>
            <person name="Merkl R."/>
            <person name="Schmitz R.A."/>
            <person name="Martinez-Arias R."/>
            <person name="Henne A."/>
            <person name="Wiezer A."/>
            <person name="Baeumer S."/>
            <person name="Jacobi C."/>
            <person name="Brueggemann H."/>
            <person name="Lienard T."/>
            <person name="Christmann A."/>
            <person name="Boemecke M."/>
            <person name="Steckel S."/>
            <person name="Bhattacharyya A."/>
            <person name="Lykidis A."/>
            <person name="Overbeek R."/>
            <person name="Klenk H.-P."/>
            <person name="Gunsalus R.P."/>
            <person name="Fritz H.-J."/>
            <person name="Gottschalk G."/>
        </authorList>
    </citation>
    <scope>NUCLEOTIDE SEQUENCE [LARGE SCALE GENOMIC DNA]</scope>
    <source>
        <strain>ATCC BAA-159 / DSM 3647 / Goe1 / Go1 / JCM 11833 / OCM 88</strain>
    </source>
</reference>
<feature type="chain" id="PRO_0000146371" description="Small ribosomal subunit protein uS12">
    <location>
        <begin position="1"/>
        <end position="142"/>
    </location>
</feature>
<accession>Q8PUR5</accession>
<dbReference type="EMBL" id="AE008384">
    <property type="protein sequence ID" value="AAM31963.1"/>
    <property type="molecule type" value="Genomic_DNA"/>
</dbReference>
<dbReference type="RefSeq" id="WP_011034194.1">
    <property type="nucleotide sequence ID" value="NC_003901.1"/>
</dbReference>
<dbReference type="SMR" id="Q8PUR5"/>
<dbReference type="KEGG" id="mma:MM_2267"/>
<dbReference type="PATRIC" id="fig|192952.21.peg.2597"/>
<dbReference type="eggNOG" id="arCOG04255">
    <property type="taxonomic scope" value="Archaea"/>
</dbReference>
<dbReference type="HOGENOM" id="CLU_115574_0_1_2"/>
<dbReference type="Proteomes" id="UP000000595">
    <property type="component" value="Chromosome"/>
</dbReference>
<dbReference type="GO" id="GO:0015935">
    <property type="term" value="C:small ribosomal subunit"/>
    <property type="evidence" value="ECO:0007669"/>
    <property type="project" value="InterPro"/>
</dbReference>
<dbReference type="GO" id="GO:0019843">
    <property type="term" value="F:rRNA binding"/>
    <property type="evidence" value="ECO:0007669"/>
    <property type="project" value="UniProtKB-UniRule"/>
</dbReference>
<dbReference type="GO" id="GO:0003735">
    <property type="term" value="F:structural constituent of ribosome"/>
    <property type="evidence" value="ECO:0007669"/>
    <property type="project" value="InterPro"/>
</dbReference>
<dbReference type="GO" id="GO:0006412">
    <property type="term" value="P:translation"/>
    <property type="evidence" value="ECO:0007669"/>
    <property type="project" value="UniProtKB-UniRule"/>
</dbReference>
<dbReference type="CDD" id="cd03367">
    <property type="entry name" value="Ribosomal_S23"/>
    <property type="match status" value="1"/>
</dbReference>
<dbReference type="FunFam" id="2.40.50.140:FF:000007">
    <property type="entry name" value="40S ribosomal protein S23"/>
    <property type="match status" value="1"/>
</dbReference>
<dbReference type="Gene3D" id="2.40.50.140">
    <property type="entry name" value="Nucleic acid-binding proteins"/>
    <property type="match status" value="1"/>
</dbReference>
<dbReference type="HAMAP" id="MF_00403_A">
    <property type="entry name" value="Ribosomal_uS12_A"/>
    <property type="match status" value="1"/>
</dbReference>
<dbReference type="InterPro" id="IPR012340">
    <property type="entry name" value="NA-bd_OB-fold"/>
</dbReference>
<dbReference type="InterPro" id="IPR006032">
    <property type="entry name" value="Ribosomal_uS12"/>
</dbReference>
<dbReference type="InterPro" id="IPR022863">
    <property type="entry name" value="Ribosomal_uS12_arc"/>
</dbReference>
<dbReference type="InterPro" id="IPR005680">
    <property type="entry name" value="Ribosomal_uS12_euk/arc"/>
</dbReference>
<dbReference type="NCBIfam" id="NF003254">
    <property type="entry name" value="PRK04211.1"/>
    <property type="match status" value="1"/>
</dbReference>
<dbReference type="NCBIfam" id="TIGR00982">
    <property type="entry name" value="uS12_E_A"/>
    <property type="match status" value="1"/>
</dbReference>
<dbReference type="PANTHER" id="PTHR11652">
    <property type="entry name" value="30S RIBOSOMAL PROTEIN S12 FAMILY MEMBER"/>
    <property type="match status" value="1"/>
</dbReference>
<dbReference type="Pfam" id="PF00164">
    <property type="entry name" value="Ribosom_S12_S23"/>
    <property type="match status" value="1"/>
</dbReference>
<dbReference type="PIRSF" id="PIRSF002133">
    <property type="entry name" value="Ribosomal_S12/S23"/>
    <property type="match status" value="1"/>
</dbReference>
<dbReference type="SUPFAM" id="SSF50249">
    <property type="entry name" value="Nucleic acid-binding proteins"/>
    <property type="match status" value="1"/>
</dbReference>
<dbReference type="PROSITE" id="PS00055">
    <property type="entry name" value="RIBOSOMAL_S12"/>
    <property type="match status" value="1"/>
</dbReference>
<keyword id="KW-0687">Ribonucleoprotein</keyword>
<keyword id="KW-0689">Ribosomal protein</keyword>
<keyword id="KW-0694">RNA-binding</keyword>
<keyword id="KW-0699">rRNA-binding</keyword>
<proteinExistence type="inferred from homology"/>
<comment type="function">
    <text evidence="1">With S4 and S5 plays an important role in translational accuracy. Located at the interface of the 30S and 50S subunits.</text>
</comment>
<comment type="subunit">
    <text evidence="1">Part of the 30S ribosomal subunit.</text>
</comment>
<comment type="similarity">
    <text evidence="1">Belongs to the universal ribosomal protein uS12 family.</text>
</comment>
<sequence>MAKGKYAANILKQTRKDARWKDTYYGRRVLGLNVKADPLGGAPQGRGIVLEKVGVEAKQPNSAIRKCVRIQLIKNGRQVTAFCPGDGAVNFIDEHDEVTVERIGGRMGGAMGDIPGVRFKVIAVNNVSLNQLVIGRLEKPRR</sequence>